<evidence type="ECO:0000250" key="1"/>
<evidence type="ECO:0000255" key="2">
    <source>
        <dbReference type="HAMAP-Rule" id="MF_01320"/>
    </source>
</evidence>
<evidence type="ECO:0000256" key="3">
    <source>
        <dbReference type="SAM" id="MobiDB-lite"/>
    </source>
</evidence>
<evidence type="ECO:0000305" key="4"/>
<protein>
    <recommendedName>
        <fullName evidence="2">Large ribosomal subunit protein uL2c</fullName>
    </recommendedName>
    <alternativeName>
        <fullName evidence="4">50S ribosomal protein L2, chloroplastic</fullName>
    </alternativeName>
</protein>
<geneLocation type="chloroplast"/>
<proteinExistence type="inferred from homology"/>
<comment type="subunit">
    <text evidence="1">Part of the 50S ribosomal subunit.</text>
</comment>
<comment type="subcellular location">
    <subcellularLocation>
        <location>Plastid</location>
        <location>Chloroplast</location>
    </subcellularLocation>
</comment>
<comment type="similarity">
    <text evidence="4">Belongs to the universal ribosomal protein uL2 family.</text>
</comment>
<organism>
    <name type="scientific">Stigeoclonium helveticum</name>
    <name type="common">Green alga</name>
    <dbReference type="NCBI Taxonomy" id="55999"/>
    <lineage>
        <taxon>Eukaryota</taxon>
        <taxon>Viridiplantae</taxon>
        <taxon>Chlorophyta</taxon>
        <taxon>core chlorophytes</taxon>
        <taxon>Chlorophyceae</taxon>
        <taxon>OCC clade</taxon>
        <taxon>Chaetophorales</taxon>
        <taxon>Chaetophoraceae</taxon>
        <taxon>Stigeoclonium</taxon>
    </lineage>
</organism>
<sequence>MGIRFLRSYTPGTRNRSVSDFNEITINKPEKSLTFSHHRCKGRNHRGIITCRHRGGGHKRLYRQIDFQRDKTKVPAQVLSIEYDPNRNARIALLRYPDGEKRYILHPRGLKIGETVISDVNASIQTGNTLPLRNIPLGTEVHNVEFQPGSGGQLARSAGTLVELLAKEGDFVTLRLPSKEIRLISRHCWATIGQVGHVEAYSIVVGKAGRTRWLGIRPTVRGSVMNPVDHPHGGGEGRAPIGRSRPVTPWGKPALGQKTRKPKKQSNKLILRKRKK</sequence>
<reference key="1">
    <citation type="journal article" date="2006" name="Mol. Genet. Genomics">
        <title>Distinctive architecture of the chloroplast genome in the chlorophycean green alga Stigeoclonium helveticum.</title>
        <authorList>
            <person name="Belanger A.-S."/>
            <person name="Brouard J.-S."/>
            <person name="Charlebois P."/>
            <person name="Otis C."/>
            <person name="Lemieux C."/>
            <person name="Turmel M."/>
        </authorList>
    </citation>
    <scope>NUCLEOTIDE SEQUENCE [LARGE SCALE GENOMIC DNA]</scope>
    <source>
        <strain>UTEX 441</strain>
    </source>
</reference>
<dbReference type="EMBL" id="DQ630521">
    <property type="protein sequence ID" value="ABF60183.1"/>
    <property type="molecule type" value="Genomic_DNA"/>
</dbReference>
<dbReference type="RefSeq" id="YP_764390.1">
    <property type="nucleotide sequence ID" value="NC_008372.1"/>
</dbReference>
<dbReference type="SMR" id="Q06SH6"/>
<dbReference type="GeneID" id="4308363"/>
<dbReference type="GO" id="GO:0009507">
    <property type="term" value="C:chloroplast"/>
    <property type="evidence" value="ECO:0007669"/>
    <property type="project" value="UniProtKB-SubCell"/>
</dbReference>
<dbReference type="GO" id="GO:0005762">
    <property type="term" value="C:mitochondrial large ribosomal subunit"/>
    <property type="evidence" value="ECO:0007669"/>
    <property type="project" value="TreeGrafter"/>
</dbReference>
<dbReference type="GO" id="GO:0019843">
    <property type="term" value="F:rRNA binding"/>
    <property type="evidence" value="ECO:0007669"/>
    <property type="project" value="UniProtKB-UniRule"/>
</dbReference>
<dbReference type="GO" id="GO:0003735">
    <property type="term" value="F:structural constituent of ribosome"/>
    <property type="evidence" value="ECO:0007669"/>
    <property type="project" value="InterPro"/>
</dbReference>
<dbReference type="GO" id="GO:0016740">
    <property type="term" value="F:transferase activity"/>
    <property type="evidence" value="ECO:0007669"/>
    <property type="project" value="InterPro"/>
</dbReference>
<dbReference type="GO" id="GO:0032543">
    <property type="term" value="P:mitochondrial translation"/>
    <property type="evidence" value="ECO:0007669"/>
    <property type="project" value="TreeGrafter"/>
</dbReference>
<dbReference type="FunFam" id="2.30.30.30:FF:000001">
    <property type="entry name" value="50S ribosomal protein L2"/>
    <property type="match status" value="1"/>
</dbReference>
<dbReference type="FunFam" id="2.40.50.140:FF:000003">
    <property type="entry name" value="50S ribosomal protein L2"/>
    <property type="match status" value="1"/>
</dbReference>
<dbReference type="FunFam" id="4.10.950.10:FF:000001">
    <property type="entry name" value="50S ribosomal protein L2"/>
    <property type="match status" value="1"/>
</dbReference>
<dbReference type="Gene3D" id="2.30.30.30">
    <property type="match status" value="1"/>
</dbReference>
<dbReference type="Gene3D" id="2.40.50.140">
    <property type="entry name" value="Nucleic acid-binding proteins"/>
    <property type="match status" value="1"/>
</dbReference>
<dbReference type="Gene3D" id="4.10.950.10">
    <property type="entry name" value="Ribosomal protein L2, domain 3"/>
    <property type="match status" value="1"/>
</dbReference>
<dbReference type="HAMAP" id="MF_01320_B">
    <property type="entry name" value="Ribosomal_uL2_B"/>
    <property type="match status" value="1"/>
</dbReference>
<dbReference type="InterPro" id="IPR012340">
    <property type="entry name" value="NA-bd_OB-fold"/>
</dbReference>
<dbReference type="InterPro" id="IPR014722">
    <property type="entry name" value="Rib_uL2_dom2"/>
</dbReference>
<dbReference type="InterPro" id="IPR002171">
    <property type="entry name" value="Ribosomal_uL2"/>
</dbReference>
<dbReference type="InterPro" id="IPR005880">
    <property type="entry name" value="Ribosomal_uL2_bac/org-type"/>
</dbReference>
<dbReference type="InterPro" id="IPR022669">
    <property type="entry name" value="Ribosomal_uL2_C"/>
</dbReference>
<dbReference type="InterPro" id="IPR022671">
    <property type="entry name" value="Ribosomal_uL2_CS"/>
</dbReference>
<dbReference type="InterPro" id="IPR014726">
    <property type="entry name" value="Ribosomal_uL2_dom3"/>
</dbReference>
<dbReference type="InterPro" id="IPR022666">
    <property type="entry name" value="Ribosomal_uL2_RNA-bd_dom"/>
</dbReference>
<dbReference type="InterPro" id="IPR008991">
    <property type="entry name" value="Translation_prot_SH3-like_sf"/>
</dbReference>
<dbReference type="NCBIfam" id="TIGR01171">
    <property type="entry name" value="rplB_bact"/>
    <property type="match status" value="1"/>
</dbReference>
<dbReference type="PANTHER" id="PTHR13691:SF5">
    <property type="entry name" value="LARGE RIBOSOMAL SUBUNIT PROTEIN UL2M"/>
    <property type="match status" value="1"/>
</dbReference>
<dbReference type="PANTHER" id="PTHR13691">
    <property type="entry name" value="RIBOSOMAL PROTEIN L2"/>
    <property type="match status" value="1"/>
</dbReference>
<dbReference type="Pfam" id="PF00181">
    <property type="entry name" value="Ribosomal_L2"/>
    <property type="match status" value="1"/>
</dbReference>
<dbReference type="Pfam" id="PF03947">
    <property type="entry name" value="Ribosomal_L2_C"/>
    <property type="match status" value="1"/>
</dbReference>
<dbReference type="PIRSF" id="PIRSF002158">
    <property type="entry name" value="Ribosomal_L2"/>
    <property type="match status" value="1"/>
</dbReference>
<dbReference type="SMART" id="SM01383">
    <property type="entry name" value="Ribosomal_L2"/>
    <property type="match status" value="1"/>
</dbReference>
<dbReference type="SMART" id="SM01382">
    <property type="entry name" value="Ribosomal_L2_C"/>
    <property type="match status" value="1"/>
</dbReference>
<dbReference type="SUPFAM" id="SSF50249">
    <property type="entry name" value="Nucleic acid-binding proteins"/>
    <property type="match status" value="1"/>
</dbReference>
<dbReference type="SUPFAM" id="SSF50104">
    <property type="entry name" value="Translation proteins SH3-like domain"/>
    <property type="match status" value="1"/>
</dbReference>
<dbReference type="PROSITE" id="PS00467">
    <property type="entry name" value="RIBOSOMAL_L2"/>
    <property type="match status" value="1"/>
</dbReference>
<gene>
    <name type="primary">rpl2</name>
</gene>
<name>RK2_STIHE</name>
<accession>Q06SH6</accession>
<keyword id="KW-0150">Chloroplast</keyword>
<keyword id="KW-0934">Plastid</keyword>
<keyword id="KW-0687">Ribonucleoprotein</keyword>
<keyword id="KW-0689">Ribosomal protein</keyword>
<feature type="chain" id="PRO_0000277102" description="Large ribosomal subunit protein uL2c">
    <location>
        <begin position="1"/>
        <end position="276"/>
    </location>
</feature>
<feature type="region of interest" description="Disordered" evidence="3">
    <location>
        <begin position="221"/>
        <end position="276"/>
    </location>
</feature>
<feature type="compositionally biased region" description="Basic residues" evidence="3">
    <location>
        <begin position="258"/>
        <end position="276"/>
    </location>
</feature>